<comment type="function">
    <text evidence="1">This protein binds specifically to 23S rRNA.</text>
</comment>
<comment type="function">
    <text evidence="1">The globular domain of the protein is located near the polypeptide exit tunnel on the outside of the subunit, while an extended beta-hairpin is found that lines the wall of the exit tunnel in the center of the 70S ribosome.</text>
</comment>
<comment type="subunit">
    <text evidence="1">Part of the 50S ribosomal subunit.</text>
</comment>
<comment type="subcellular location">
    <subcellularLocation>
        <location>Plastid</location>
        <location>Chloroplast</location>
    </subcellularLocation>
</comment>
<comment type="similarity">
    <text evidence="2">Belongs to the universal ribosomal protein uL22 family.</text>
</comment>
<gene>
    <name type="primary">rpl22</name>
</gene>
<dbReference type="EMBL" id="EF044213">
    <property type="protein sequence ID" value="ABJ89718.1"/>
    <property type="molecule type" value="Genomic_DNA"/>
</dbReference>
<dbReference type="RefSeq" id="YP_817522.1">
    <property type="nucleotide sequence ID" value="NC_008535.1"/>
</dbReference>
<dbReference type="SMR" id="A0A375"/>
<dbReference type="GeneID" id="4421819"/>
<dbReference type="OrthoDB" id="1840754at2759"/>
<dbReference type="Proteomes" id="UP000515148">
    <property type="component" value="Chloroplast Pltd"/>
</dbReference>
<dbReference type="GO" id="GO:0009507">
    <property type="term" value="C:chloroplast"/>
    <property type="evidence" value="ECO:0007669"/>
    <property type="project" value="UniProtKB-SubCell"/>
</dbReference>
<dbReference type="GO" id="GO:0015934">
    <property type="term" value="C:large ribosomal subunit"/>
    <property type="evidence" value="ECO:0007669"/>
    <property type="project" value="InterPro"/>
</dbReference>
<dbReference type="GO" id="GO:0019843">
    <property type="term" value="F:rRNA binding"/>
    <property type="evidence" value="ECO:0007669"/>
    <property type="project" value="UniProtKB-UniRule"/>
</dbReference>
<dbReference type="GO" id="GO:0003735">
    <property type="term" value="F:structural constituent of ribosome"/>
    <property type="evidence" value="ECO:0007669"/>
    <property type="project" value="InterPro"/>
</dbReference>
<dbReference type="GO" id="GO:0006412">
    <property type="term" value="P:translation"/>
    <property type="evidence" value="ECO:0007669"/>
    <property type="project" value="UniProtKB-UniRule"/>
</dbReference>
<dbReference type="CDD" id="cd00336">
    <property type="entry name" value="Ribosomal_L22"/>
    <property type="match status" value="1"/>
</dbReference>
<dbReference type="FunFam" id="3.90.470.10:FF:000006">
    <property type="entry name" value="50S ribosomal protein L22, chloroplastic"/>
    <property type="match status" value="1"/>
</dbReference>
<dbReference type="Gene3D" id="3.90.470.10">
    <property type="entry name" value="Ribosomal protein L22/L17"/>
    <property type="match status" value="1"/>
</dbReference>
<dbReference type="HAMAP" id="MF_01331_B">
    <property type="entry name" value="Ribosomal_uL22_B"/>
    <property type="match status" value="1"/>
</dbReference>
<dbReference type="InterPro" id="IPR001063">
    <property type="entry name" value="Ribosomal_uL22"/>
</dbReference>
<dbReference type="InterPro" id="IPR005727">
    <property type="entry name" value="Ribosomal_uL22_bac/chlpt-type"/>
</dbReference>
<dbReference type="InterPro" id="IPR047867">
    <property type="entry name" value="Ribosomal_uL22_bac/org-type"/>
</dbReference>
<dbReference type="InterPro" id="IPR018260">
    <property type="entry name" value="Ribosomal_uL22_CS"/>
</dbReference>
<dbReference type="InterPro" id="IPR036394">
    <property type="entry name" value="Ribosomal_uL22_sf"/>
</dbReference>
<dbReference type="NCBIfam" id="TIGR01044">
    <property type="entry name" value="rplV_bact"/>
    <property type="match status" value="1"/>
</dbReference>
<dbReference type="PANTHER" id="PTHR13501">
    <property type="entry name" value="CHLOROPLAST 50S RIBOSOMAL PROTEIN L22-RELATED"/>
    <property type="match status" value="1"/>
</dbReference>
<dbReference type="PANTHER" id="PTHR13501:SF10">
    <property type="entry name" value="LARGE RIBOSOMAL SUBUNIT PROTEIN UL22M"/>
    <property type="match status" value="1"/>
</dbReference>
<dbReference type="Pfam" id="PF00237">
    <property type="entry name" value="Ribosomal_L22"/>
    <property type="match status" value="1"/>
</dbReference>
<dbReference type="SUPFAM" id="SSF54843">
    <property type="entry name" value="Ribosomal protein L22"/>
    <property type="match status" value="1"/>
</dbReference>
<dbReference type="PROSITE" id="PS00464">
    <property type="entry name" value="RIBOSOMAL_L22"/>
    <property type="match status" value="1"/>
</dbReference>
<protein>
    <recommendedName>
        <fullName evidence="2">Large ribosomal subunit protein uL22c</fullName>
    </recommendedName>
    <alternativeName>
        <fullName>50S ribosomal protein L22, chloroplastic</fullName>
    </alternativeName>
</protein>
<keyword id="KW-0150">Chloroplast</keyword>
<keyword id="KW-0934">Plastid</keyword>
<keyword id="KW-1185">Reference proteome</keyword>
<keyword id="KW-0687">Ribonucleoprotein</keyword>
<keyword id="KW-0689">Ribosomal protein</keyword>
<keyword id="KW-0694">RNA-binding</keyword>
<keyword id="KW-0699">rRNA-binding</keyword>
<organism>
    <name type="scientific">Coffea arabica</name>
    <name type="common">Arabian coffee</name>
    <dbReference type="NCBI Taxonomy" id="13443"/>
    <lineage>
        <taxon>Eukaryota</taxon>
        <taxon>Viridiplantae</taxon>
        <taxon>Streptophyta</taxon>
        <taxon>Embryophyta</taxon>
        <taxon>Tracheophyta</taxon>
        <taxon>Spermatophyta</taxon>
        <taxon>Magnoliopsida</taxon>
        <taxon>eudicotyledons</taxon>
        <taxon>Gunneridae</taxon>
        <taxon>Pentapetalae</taxon>
        <taxon>asterids</taxon>
        <taxon>lamiids</taxon>
        <taxon>Gentianales</taxon>
        <taxon>Rubiaceae</taxon>
        <taxon>Ixoroideae</taxon>
        <taxon>Gardenieae complex</taxon>
        <taxon>Bertiereae - Coffeeae clade</taxon>
        <taxon>Coffeeae</taxon>
        <taxon>Coffea</taxon>
    </lineage>
</organism>
<evidence type="ECO:0000250" key="1"/>
<evidence type="ECO:0000305" key="2"/>
<proteinExistence type="inferred from homology"/>
<sequence>MLKKKKTEVYALGQHISMSADKARRVIDQIRGRSYEETLIILELMPYRACYPIFKLVYSAAANASYNMSSNDANLLISKAEVNEGTTIKKFKPRARGRSYPIKRPTCHITIVMKDISLDDEYVKINSLKKPRWKNKHTAMVYHDMYSSGGVWDKK</sequence>
<feature type="chain" id="PRO_0000276442" description="Large ribosomal subunit protein uL22c">
    <location>
        <begin position="1"/>
        <end position="155"/>
    </location>
</feature>
<name>RK22_COFAR</name>
<accession>A0A375</accession>
<geneLocation type="chloroplast"/>
<reference key="1">
    <citation type="journal article" date="2007" name="Plant Biotechnol. J.">
        <title>The complete nucleotide sequence of the coffee (Coffea arabica L.) chloroplast genome: organization and implications for biotechnology and phylogenetic relationships amongst angiosperms.</title>
        <authorList>
            <person name="Samson N."/>
            <person name="Bausher M.G."/>
            <person name="Lee S.-B."/>
            <person name="Jansen R.K."/>
            <person name="Daniell H."/>
        </authorList>
    </citation>
    <scope>NUCLEOTIDE SEQUENCE [LARGE SCALE GENOMIC DNA]</scope>
</reference>